<name>UTP10_KLULA</name>
<sequence>MSSLRDQLAQVAQNNATVALDRKRRQKLHSASLVYNPKTAATQDYEYIYDTALESFHTLVSLDLRFKVFTNSLFSASSVTIDRNVQTKDQIRDLDNAVNAYLMLISPKWHLTPALHATEWLIRRFQIHIHNAEMLLLSTLNQYQTPVFKRILNIVKLPPLFNPFTNFVRNDKNPTDLTLIKLFNDMDFLKLYSNYLSKIIKQKVTYTNQLLFTTCCFINVIAFNANDEDKLNKLVPLILEISAKLLASDSSDCQMAAHTMLAVLATALPLNKSIIIAATETILANLKEDDARKKALVTISKLFQTLKGVGNVDQLPVKIYKLVDNSFPFEYLLQFLSNENKYSSDKFFTAYIRSVIRYDHDKLSQIVKILRKIKLEKYEVRFIITDLIHLSEVLEDKSQLIDVFEYFISINEGLVLKCLQALNLTGEVFEIRLTTSLFSVKNSAEQSGEDIIKVLDDAKASTANGSAVPFKDFMTKNSEFISTKAESMLLVKDEKFVKLLSLFVEAVSKGYQPGLFLSSFFTTLESRITFVLRIIVSPGSPVALRLISLTQLSKFINGIDEQTDLFSLVPILVTALMDISRSVRSNTKKVLQQIAKRPFTAKYFLSNVLYGENLKVPMLSPKDSKFWLTNFLSDYIVESTDISSLVIPSKNDMVYMLFWCNQALHLPLAYSKTIMLKLLTAVPQYAFTYSKVFEQFMATYITERSSWETKCIKNKTNFKDFETAVCAIVAPKEKNSFAIDFLINCLESEYEQLSNIMADRILSLYPTLKFPNQLKIVQSIIDSSVDKELSYDGLETLQSLPLTADIFVSVLKSNTINSEDQTDLTKRRRRRSSTVNKSALQKQDISQIAEAHLKKMTIILETLDKLKVKSNENLLNALFNLLSDLETLDHDGGLPVLYAQETLSSCLLNTISSLKSNNGSMKLPSIRADILVAAIRSSTSPQMQNKLLLVVGALASVSPETILHSVMPIFTFMGAHTIRQDDEFSTLVVERTISTIVPALLKSTEVTNKSDEIEFLLMSFSTAFSHVPKHRRVSLYSTLVRELGPSDVIAPFLFLIAQQYSNCLEKFKIAESKNYIEFFKAFLSKFDILEQLHGFNELFNLVELLDEDSSKNEVAPTRTLFSNGIVNMSKSELFVLKKNDLDFIDKVIGESKSDYYNTSSNLKLRILSTLLDPNIEIEVKNQVRNEFSILLSKTLNAINMTDSLSYDKHSSAGSNDEEAGSESEAEVDQKELKDILFGLLEHVLDLLPIQDFVASILPLLQGNTDESVRHHLTVVTSNKFIEEPMESFETANEILSTLVETTEKASESTQILQVTLNTISSIVTRFGDRLDSHLLVKSMENSCKQLTSKKIELEISSLTVLTTLIQTLGVKTLAFYPKIVPVAISIFKTYQNAKNNLKEQLQLAIVLLFASMIKKIPSFLLSNLQDVFVILFHSDEVADSVRLSVISLIVEHIPLKDVFKTLQKVWTNDVSSSNNSVAVSLFLSMLESAVEAIDKKSATQQSPVFFRLLLNLFEYRSICTFDENSINRIEASVHQIANVYVLKLNDKVFRPLFALVVNWAFNGEGVTNTNMSKEERLMAFYKFYNKTQENLKSIITSYFTYLLEPTNNLLKQFISKETVNVSLRRLVLISLTSSFKYDRDEYWKSTSRFELISESLINQLTNVEDVIGKYLVKAIGSLATNNSGVDEHNKIMSDLMISHMKTSCKTREKFWAVRSMKLIYSKVGDGWLVLLPRLVPIIAELLEDEDEEVEYEVRSGLVKVVESVMGEPFDRYLS</sequence>
<organism>
    <name type="scientific">Kluyveromyces lactis (strain ATCC 8585 / CBS 2359 / DSM 70799 / NBRC 1267 / NRRL Y-1140 / WM37)</name>
    <name type="common">Yeast</name>
    <name type="synonym">Candida sphaerica</name>
    <dbReference type="NCBI Taxonomy" id="284590"/>
    <lineage>
        <taxon>Eukaryota</taxon>
        <taxon>Fungi</taxon>
        <taxon>Dikarya</taxon>
        <taxon>Ascomycota</taxon>
        <taxon>Saccharomycotina</taxon>
        <taxon>Saccharomycetes</taxon>
        <taxon>Saccharomycetales</taxon>
        <taxon>Saccharomycetaceae</taxon>
        <taxon>Kluyveromyces</taxon>
    </lineage>
</organism>
<reference evidence="5" key="1">
    <citation type="journal article" date="2004" name="Nature">
        <title>Genome evolution in yeasts.</title>
        <authorList>
            <person name="Dujon B."/>
            <person name="Sherman D."/>
            <person name="Fischer G."/>
            <person name="Durrens P."/>
            <person name="Casaregola S."/>
            <person name="Lafontaine I."/>
            <person name="de Montigny J."/>
            <person name="Marck C."/>
            <person name="Neuveglise C."/>
            <person name="Talla E."/>
            <person name="Goffard N."/>
            <person name="Frangeul L."/>
            <person name="Aigle M."/>
            <person name="Anthouard V."/>
            <person name="Babour A."/>
            <person name="Barbe V."/>
            <person name="Barnay S."/>
            <person name="Blanchin S."/>
            <person name="Beckerich J.-M."/>
            <person name="Beyne E."/>
            <person name="Bleykasten C."/>
            <person name="Boisrame A."/>
            <person name="Boyer J."/>
            <person name="Cattolico L."/>
            <person name="Confanioleri F."/>
            <person name="de Daruvar A."/>
            <person name="Despons L."/>
            <person name="Fabre E."/>
            <person name="Fairhead C."/>
            <person name="Ferry-Dumazet H."/>
            <person name="Groppi A."/>
            <person name="Hantraye F."/>
            <person name="Hennequin C."/>
            <person name="Jauniaux N."/>
            <person name="Joyet P."/>
            <person name="Kachouri R."/>
            <person name="Kerrest A."/>
            <person name="Koszul R."/>
            <person name="Lemaire M."/>
            <person name="Lesur I."/>
            <person name="Ma L."/>
            <person name="Muller H."/>
            <person name="Nicaud J.-M."/>
            <person name="Nikolski M."/>
            <person name="Oztas S."/>
            <person name="Ozier-Kalogeropoulos O."/>
            <person name="Pellenz S."/>
            <person name="Potier S."/>
            <person name="Richard G.-F."/>
            <person name="Straub M.-L."/>
            <person name="Suleau A."/>
            <person name="Swennen D."/>
            <person name="Tekaia F."/>
            <person name="Wesolowski-Louvel M."/>
            <person name="Westhof E."/>
            <person name="Wirth B."/>
            <person name="Zeniou-Meyer M."/>
            <person name="Zivanovic Y."/>
            <person name="Bolotin-Fukuhara M."/>
            <person name="Thierry A."/>
            <person name="Bouchier C."/>
            <person name="Caudron B."/>
            <person name="Scarpelli C."/>
            <person name="Gaillardin C."/>
            <person name="Weissenbach J."/>
            <person name="Wincker P."/>
            <person name="Souciet J.-L."/>
        </authorList>
    </citation>
    <scope>NUCLEOTIDE SEQUENCE [LARGE SCALE GENOMIC DNA]</scope>
    <source>
        <strain>ATCC 8585 / CBS 2359 / DSM 70799 / NBRC 1267 / NRRL Y-1140 / WM37</strain>
    </source>
</reference>
<evidence type="ECO:0000250" key="1">
    <source>
        <dbReference type="UniProtKB" id="P42945"/>
    </source>
</evidence>
<evidence type="ECO:0000255" key="2"/>
<evidence type="ECO:0000256" key="3">
    <source>
        <dbReference type="SAM" id="MobiDB-lite"/>
    </source>
</evidence>
<evidence type="ECO:0000305" key="4"/>
<evidence type="ECO:0000312" key="5">
    <source>
        <dbReference type="EMBL" id="CAG98740.1"/>
    </source>
</evidence>
<comment type="function">
    <text evidence="1">Involved in nucleolar processing of pre-18S ribosomal RNA. Involved in ribosome biosynthesis (By similarity).</text>
</comment>
<comment type="subunit">
    <text evidence="1">Component of the ribosomal small subunit (SSU) processome.</text>
</comment>
<comment type="subcellular location">
    <subcellularLocation>
        <location evidence="1">Nucleus</location>
        <location evidence="1">Nucleolus</location>
    </subcellularLocation>
</comment>
<comment type="similarity">
    <text evidence="4">Belongs to the HEATR1/UTP10 family.</text>
</comment>
<proteinExistence type="inferred from homology"/>
<feature type="chain" id="PRO_0000308505" description="U3 small nucleolar RNA-associated protein 10">
    <location>
        <begin position="1"/>
        <end position="1774"/>
    </location>
</feature>
<feature type="repeat" description="HEAT" evidence="2">
    <location>
        <begin position="1734"/>
        <end position="1772"/>
    </location>
</feature>
<feature type="region of interest" description="Disordered" evidence="3">
    <location>
        <begin position="1206"/>
        <end position="1226"/>
    </location>
</feature>
<feature type="compositionally biased region" description="Acidic residues" evidence="3">
    <location>
        <begin position="1215"/>
        <end position="1226"/>
    </location>
</feature>
<keyword id="KW-0539">Nucleus</keyword>
<keyword id="KW-1185">Reference proteome</keyword>
<keyword id="KW-0677">Repeat</keyword>
<keyword id="KW-0687">Ribonucleoprotein</keyword>
<keyword id="KW-0690">Ribosome biogenesis</keyword>
<keyword id="KW-0698">rRNA processing</keyword>
<gene>
    <name evidence="1" type="primary">UTP10</name>
    <name type="ordered locus">KLLA0F21208g</name>
</gene>
<dbReference type="EMBL" id="CR382126">
    <property type="protein sequence ID" value="CAG98740.1"/>
    <property type="molecule type" value="Genomic_DNA"/>
</dbReference>
<dbReference type="RefSeq" id="XP_456032.1">
    <property type="nucleotide sequence ID" value="XM_456032.1"/>
</dbReference>
<dbReference type="SMR" id="Q6CJ57"/>
<dbReference type="FunCoup" id="Q6CJ57">
    <property type="interactions" value="1215"/>
</dbReference>
<dbReference type="STRING" id="284590.Q6CJ57"/>
<dbReference type="PaxDb" id="284590-Q6CJ57"/>
<dbReference type="KEGG" id="kla:KLLA0_F21208g"/>
<dbReference type="eggNOG" id="KOG1837">
    <property type="taxonomic scope" value="Eukaryota"/>
</dbReference>
<dbReference type="HOGENOM" id="CLU_001128_3_1_1"/>
<dbReference type="InParanoid" id="Q6CJ57"/>
<dbReference type="OMA" id="GEPFDRY"/>
<dbReference type="Proteomes" id="UP000000598">
    <property type="component" value="Chromosome F"/>
</dbReference>
<dbReference type="GO" id="GO:0030686">
    <property type="term" value="C:90S preribosome"/>
    <property type="evidence" value="ECO:0007669"/>
    <property type="project" value="TreeGrafter"/>
</dbReference>
<dbReference type="GO" id="GO:0032040">
    <property type="term" value="C:small-subunit processome"/>
    <property type="evidence" value="ECO:0007669"/>
    <property type="project" value="TreeGrafter"/>
</dbReference>
<dbReference type="GO" id="GO:0034455">
    <property type="term" value="C:t-UTP complex"/>
    <property type="evidence" value="ECO:0007669"/>
    <property type="project" value="TreeGrafter"/>
</dbReference>
<dbReference type="GO" id="GO:0030515">
    <property type="term" value="F:snoRNA binding"/>
    <property type="evidence" value="ECO:0007669"/>
    <property type="project" value="TreeGrafter"/>
</dbReference>
<dbReference type="GO" id="GO:0000462">
    <property type="term" value="P:maturation of SSU-rRNA from tricistronic rRNA transcript (SSU-rRNA, 5.8S rRNA, LSU-rRNA)"/>
    <property type="evidence" value="ECO:0007669"/>
    <property type="project" value="TreeGrafter"/>
</dbReference>
<dbReference type="GO" id="GO:0045943">
    <property type="term" value="P:positive regulation of transcription by RNA polymerase I"/>
    <property type="evidence" value="ECO:0007669"/>
    <property type="project" value="TreeGrafter"/>
</dbReference>
<dbReference type="FunFam" id="1.25.10.10:FF:000530">
    <property type="entry name" value="UTP10p Nucleolar protein"/>
    <property type="match status" value="1"/>
</dbReference>
<dbReference type="InterPro" id="IPR016024">
    <property type="entry name" value="ARM-type_fold"/>
</dbReference>
<dbReference type="InterPro" id="IPR012954">
    <property type="entry name" value="BP28_C_dom"/>
</dbReference>
<dbReference type="InterPro" id="IPR021133">
    <property type="entry name" value="HEAT_type_2"/>
</dbReference>
<dbReference type="InterPro" id="IPR056473">
    <property type="entry name" value="HEAT_Utp10/HEAT1"/>
</dbReference>
<dbReference type="InterPro" id="IPR022125">
    <property type="entry name" value="U3snoRNP10_N"/>
</dbReference>
<dbReference type="InterPro" id="IPR040191">
    <property type="entry name" value="UTP10"/>
</dbReference>
<dbReference type="PANTHER" id="PTHR13457">
    <property type="entry name" value="BAP28"/>
    <property type="match status" value="1"/>
</dbReference>
<dbReference type="PANTHER" id="PTHR13457:SF1">
    <property type="entry name" value="HEAT REPEAT-CONTAINING PROTEIN 1"/>
    <property type="match status" value="1"/>
</dbReference>
<dbReference type="Pfam" id="PF08146">
    <property type="entry name" value="BP28CT"/>
    <property type="match status" value="1"/>
</dbReference>
<dbReference type="Pfam" id="PF23243">
    <property type="entry name" value="HEAT_HEATR1"/>
    <property type="match status" value="1"/>
</dbReference>
<dbReference type="Pfam" id="PF12397">
    <property type="entry name" value="U3snoRNP10"/>
    <property type="match status" value="1"/>
</dbReference>
<dbReference type="SMART" id="SM01036">
    <property type="entry name" value="BP28CT"/>
    <property type="match status" value="1"/>
</dbReference>
<dbReference type="SUPFAM" id="SSF48371">
    <property type="entry name" value="ARM repeat"/>
    <property type="match status" value="1"/>
</dbReference>
<dbReference type="PROSITE" id="PS50077">
    <property type="entry name" value="HEAT_REPEAT"/>
    <property type="match status" value="1"/>
</dbReference>
<accession>Q6CJ57</accession>
<protein>
    <recommendedName>
        <fullName>U3 small nucleolar RNA-associated protein 10</fullName>
    </recommendedName>
</protein>